<accession>Q7VQM1</accession>
<feature type="chain" id="PRO_0000115390" description="Small ribosomal subunit protein uS15">
    <location>
        <begin position="1"/>
        <end position="90"/>
    </location>
</feature>
<sequence>MHYNAEQKSKIILKFGFNNIKNTGITEVQVALLTQRINALKSHFNKHKQDHHSRRGLLHIVTRRRKLLKYLKKSSVLRYNNLIESLALRH</sequence>
<keyword id="KW-1185">Reference proteome</keyword>
<keyword id="KW-0687">Ribonucleoprotein</keyword>
<keyword id="KW-0689">Ribosomal protein</keyword>
<keyword id="KW-0694">RNA-binding</keyword>
<keyword id="KW-0699">rRNA-binding</keyword>
<name>RS15_BLOFL</name>
<organism>
    <name type="scientific">Blochmanniella floridana</name>
    <dbReference type="NCBI Taxonomy" id="203907"/>
    <lineage>
        <taxon>Bacteria</taxon>
        <taxon>Pseudomonadati</taxon>
        <taxon>Pseudomonadota</taxon>
        <taxon>Gammaproteobacteria</taxon>
        <taxon>Enterobacterales</taxon>
        <taxon>Enterobacteriaceae</taxon>
        <taxon>ant endosymbionts</taxon>
        <taxon>Candidatus Blochmanniella</taxon>
    </lineage>
</organism>
<evidence type="ECO:0000255" key="1">
    <source>
        <dbReference type="HAMAP-Rule" id="MF_01343"/>
    </source>
</evidence>
<evidence type="ECO:0000305" key="2"/>
<protein>
    <recommendedName>
        <fullName evidence="1">Small ribosomal subunit protein uS15</fullName>
    </recommendedName>
    <alternativeName>
        <fullName evidence="2">30S ribosomal protein S15</fullName>
    </alternativeName>
</protein>
<comment type="function">
    <text evidence="1">One of the primary rRNA binding proteins, it binds directly to 16S rRNA where it helps nucleate assembly of the platform of the 30S subunit by binding and bridging several RNA helices of the 16S rRNA.</text>
</comment>
<comment type="function">
    <text evidence="1">Forms an intersubunit bridge (bridge B4) with the 23S rRNA of the 50S subunit in the ribosome.</text>
</comment>
<comment type="subunit">
    <text evidence="1">Part of the 30S ribosomal subunit. Forms a bridge to the 50S subunit in the 70S ribosome, contacting the 23S rRNA.</text>
</comment>
<comment type="similarity">
    <text evidence="1">Belongs to the universal ribosomal protein uS15 family.</text>
</comment>
<reference key="1">
    <citation type="journal article" date="2003" name="Proc. Natl. Acad. Sci. U.S.A.">
        <title>The genome sequence of Blochmannia floridanus: comparative analysis of reduced genomes.</title>
        <authorList>
            <person name="Gil R."/>
            <person name="Silva F.J."/>
            <person name="Zientz E."/>
            <person name="Delmotte F."/>
            <person name="Gonzalez-Candelas F."/>
            <person name="Latorre A."/>
            <person name="Rausell C."/>
            <person name="Kamerbeek J."/>
            <person name="Gadau J."/>
            <person name="Hoelldobler B."/>
            <person name="van Ham R.C.H.J."/>
            <person name="Gross R."/>
            <person name="Moya A."/>
        </authorList>
    </citation>
    <scope>NUCLEOTIDE SEQUENCE [LARGE SCALE GENOMIC DNA]</scope>
</reference>
<dbReference type="EMBL" id="BX248583">
    <property type="protein sequence ID" value="CAD83628.1"/>
    <property type="molecule type" value="Genomic_DNA"/>
</dbReference>
<dbReference type="SMR" id="Q7VQM1"/>
<dbReference type="STRING" id="203907.Bfl107"/>
<dbReference type="KEGG" id="bfl:Bfl107"/>
<dbReference type="eggNOG" id="COG0184">
    <property type="taxonomic scope" value="Bacteria"/>
</dbReference>
<dbReference type="HOGENOM" id="CLU_148518_0_0_6"/>
<dbReference type="OrthoDB" id="9799262at2"/>
<dbReference type="Proteomes" id="UP000002192">
    <property type="component" value="Chromosome"/>
</dbReference>
<dbReference type="GO" id="GO:0022627">
    <property type="term" value="C:cytosolic small ribosomal subunit"/>
    <property type="evidence" value="ECO:0007669"/>
    <property type="project" value="TreeGrafter"/>
</dbReference>
<dbReference type="GO" id="GO:0019843">
    <property type="term" value="F:rRNA binding"/>
    <property type="evidence" value="ECO:0007669"/>
    <property type="project" value="UniProtKB-UniRule"/>
</dbReference>
<dbReference type="GO" id="GO:0003735">
    <property type="term" value="F:structural constituent of ribosome"/>
    <property type="evidence" value="ECO:0007669"/>
    <property type="project" value="InterPro"/>
</dbReference>
<dbReference type="GO" id="GO:0006412">
    <property type="term" value="P:translation"/>
    <property type="evidence" value="ECO:0007669"/>
    <property type="project" value="UniProtKB-UniRule"/>
</dbReference>
<dbReference type="CDD" id="cd00353">
    <property type="entry name" value="Ribosomal_S15p_S13e"/>
    <property type="match status" value="1"/>
</dbReference>
<dbReference type="FunFam" id="1.10.287.10:FF:000002">
    <property type="entry name" value="30S ribosomal protein S15"/>
    <property type="match status" value="1"/>
</dbReference>
<dbReference type="Gene3D" id="6.10.250.3130">
    <property type="match status" value="1"/>
</dbReference>
<dbReference type="Gene3D" id="1.10.287.10">
    <property type="entry name" value="S15/NS1, RNA-binding"/>
    <property type="match status" value="1"/>
</dbReference>
<dbReference type="HAMAP" id="MF_01343_B">
    <property type="entry name" value="Ribosomal_uS15_B"/>
    <property type="match status" value="1"/>
</dbReference>
<dbReference type="InterPro" id="IPR000589">
    <property type="entry name" value="Ribosomal_uS15"/>
</dbReference>
<dbReference type="InterPro" id="IPR005290">
    <property type="entry name" value="Ribosomal_uS15_bac-type"/>
</dbReference>
<dbReference type="InterPro" id="IPR009068">
    <property type="entry name" value="uS15_NS1_RNA-bd_sf"/>
</dbReference>
<dbReference type="NCBIfam" id="TIGR00952">
    <property type="entry name" value="S15_bact"/>
    <property type="match status" value="1"/>
</dbReference>
<dbReference type="PANTHER" id="PTHR23321">
    <property type="entry name" value="RIBOSOMAL PROTEIN S15, BACTERIAL AND ORGANELLAR"/>
    <property type="match status" value="1"/>
</dbReference>
<dbReference type="PANTHER" id="PTHR23321:SF26">
    <property type="entry name" value="SMALL RIBOSOMAL SUBUNIT PROTEIN US15M"/>
    <property type="match status" value="1"/>
</dbReference>
<dbReference type="Pfam" id="PF00312">
    <property type="entry name" value="Ribosomal_S15"/>
    <property type="match status" value="1"/>
</dbReference>
<dbReference type="SMART" id="SM01387">
    <property type="entry name" value="Ribosomal_S15"/>
    <property type="match status" value="1"/>
</dbReference>
<dbReference type="SUPFAM" id="SSF47060">
    <property type="entry name" value="S15/NS1 RNA-binding domain"/>
    <property type="match status" value="1"/>
</dbReference>
<dbReference type="PROSITE" id="PS00362">
    <property type="entry name" value="RIBOSOMAL_S15"/>
    <property type="match status" value="1"/>
</dbReference>
<proteinExistence type="inferred from homology"/>
<gene>
    <name evidence="1" type="primary">rpsO</name>
    <name type="ordered locus">Bfl107</name>
</gene>